<reference key="1">
    <citation type="journal article" date="2004" name="Nucleic Acids Res.">
        <title>Comparative analysis of the Borrelia garinii genome.</title>
        <authorList>
            <person name="Gloeckner G."/>
            <person name="Lehmann R."/>
            <person name="Romualdi A."/>
            <person name="Pradella S."/>
            <person name="Schulte-Spechtel U."/>
            <person name="Schilhabel M."/>
            <person name="Wilske B."/>
            <person name="Suehnel J."/>
            <person name="Platzer M."/>
        </authorList>
    </citation>
    <scope>NUCLEOTIDE SEQUENCE [LARGE SCALE GENOMIC DNA]</scope>
    <source>
        <strain>ATCC BAA-2496 / DSM 23469 / PBi</strain>
    </source>
</reference>
<evidence type="ECO:0000255" key="1">
    <source>
        <dbReference type="HAMAP-Rule" id="MF_01726"/>
    </source>
</evidence>
<comment type="function">
    <text evidence="1">Part of the ABC transporter complex PotABCD involved in spermidine/putrescine import. Responsible for energy coupling to the transport system.</text>
</comment>
<comment type="catalytic activity">
    <reaction evidence="1">
        <text>ATP + H2O + polyamine-[polyamine-binding protein]Side 1 = ADP + phosphate + polyamineSide 2 + [polyamine-binding protein]Side 1.</text>
        <dbReference type="EC" id="7.6.2.11"/>
    </reaction>
</comment>
<comment type="subunit">
    <text evidence="1">The complex is composed of two ATP-binding proteins (PotA), two transmembrane proteins (PotB and PotC) and a solute-binding protein (PotD).</text>
</comment>
<comment type="subcellular location">
    <subcellularLocation>
        <location evidence="1">Cell inner membrane</location>
        <topology evidence="1">Peripheral membrane protein</topology>
    </subcellularLocation>
</comment>
<comment type="similarity">
    <text evidence="1">Belongs to the ABC transporter superfamily. Spermidine/putrescine importer (TC 3.A.1.11.1) family.</text>
</comment>
<sequence>MDNCILEIRNLSHYYDNNGNKTLDNINLKIKKNEFITLLGPSGCGKTTLIKILGGFLSQKNGEIYFFSKEISKTSPNKREINTVFQNYALFPHMNVFDNISFGLRMKKTPKDIIKEKVKTSLSLIGMPKYAYRNINELSGGQKQRVAIARAMVMEPKLLLLDEPLSALDLKMRQEMQKELKKIQRQLGITFIYVTHDQEEALTMSDRIVVMNEGIILQVGTPEEIYNEPKTKFVADFIGESNIFDGTYKKELVVSLLGYEFECLDKGFEAEEAVDLVIRPEDIKLLPKGKGHLSGIITSAIFQGVHYEMTLEIQKTNWIVQSTRLTKVGEEVDIFLEPDDIHVMHKE</sequence>
<proteinExistence type="inferred from homology"/>
<name>POTA_BORGP</name>
<keyword id="KW-0067">ATP-binding</keyword>
<keyword id="KW-0997">Cell inner membrane</keyword>
<keyword id="KW-1003">Cell membrane</keyword>
<keyword id="KW-0472">Membrane</keyword>
<keyword id="KW-0547">Nucleotide-binding</keyword>
<keyword id="KW-1278">Translocase</keyword>
<keyword id="KW-0813">Transport</keyword>
<gene>
    <name evidence="1" type="primary">potA</name>
    <name type="ordered locus">BG0665</name>
</gene>
<dbReference type="EC" id="7.6.2.11" evidence="1"/>
<dbReference type="EMBL" id="CP000013">
    <property type="protein sequence ID" value="AAU07493.1"/>
    <property type="molecule type" value="Genomic_DNA"/>
</dbReference>
<dbReference type="RefSeq" id="WP_004791287.1">
    <property type="nucleotide sequence ID" value="NZ_CP028872.1"/>
</dbReference>
<dbReference type="SMR" id="Q660M8"/>
<dbReference type="KEGG" id="bga:BG0665"/>
<dbReference type="eggNOG" id="COG3842">
    <property type="taxonomic scope" value="Bacteria"/>
</dbReference>
<dbReference type="HOGENOM" id="CLU_000604_1_1_12"/>
<dbReference type="OrthoDB" id="9802264at2"/>
<dbReference type="Proteomes" id="UP000002276">
    <property type="component" value="Chromosome"/>
</dbReference>
<dbReference type="GO" id="GO:0043190">
    <property type="term" value="C:ATP-binding cassette (ABC) transporter complex"/>
    <property type="evidence" value="ECO:0007669"/>
    <property type="project" value="InterPro"/>
</dbReference>
<dbReference type="GO" id="GO:0015417">
    <property type="term" value="F:ABC-type polyamine transporter activity"/>
    <property type="evidence" value="ECO:0007669"/>
    <property type="project" value="UniProtKB-EC"/>
</dbReference>
<dbReference type="GO" id="GO:0005524">
    <property type="term" value="F:ATP binding"/>
    <property type="evidence" value="ECO:0007669"/>
    <property type="project" value="UniProtKB-KW"/>
</dbReference>
<dbReference type="GO" id="GO:0016887">
    <property type="term" value="F:ATP hydrolysis activity"/>
    <property type="evidence" value="ECO:0007669"/>
    <property type="project" value="InterPro"/>
</dbReference>
<dbReference type="FunFam" id="3.40.50.300:FF:000133">
    <property type="entry name" value="Spermidine/putrescine import ATP-binding protein PotA"/>
    <property type="match status" value="1"/>
</dbReference>
<dbReference type="Gene3D" id="2.40.50.100">
    <property type="match status" value="1"/>
</dbReference>
<dbReference type="Gene3D" id="3.40.50.300">
    <property type="entry name" value="P-loop containing nucleotide triphosphate hydrolases"/>
    <property type="match status" value="1"/>
</dbReference>
<dbReference type="InterPro" id="IPR003593">
    <property type="entry name" value="AAA+_ATPase"/>
</dbReference>
<dbReference type="InterPro" id="IPR050093">
    <property type="entry name" value="ABC_SmlMolc_Importer"/>
</dbReference>
<dbReference type="InterPro" id="IPR003439">
    <property type="entry name" value="ABC_transporter-like_ATP-bd"/>
</dbReference>
<dbReference type="InterPro" id="IPR017871">
    <property type="entry name" value="ABC_transporter-like_CS"/>
</dbReference>
<dbReference type="InterPro" id="IPR008995">
    <property type="entry name" value="Mo/tungstate-bd_C_term_dom"/>
</dbReference>
<dbReference type="InterPro" id="IPR027417">
    <property type="entry name" value="P-loop_NTPase"/>
</dbReference>
<dbReference type="InterPro" id="IPR005893">
    <property type="entry name" value="PotA-like"/>
</dbReference>
<dbReference type="InterPro" id="IPR013611">
    <property type="entry name" value="Transp-assoc_OB_typ2"/>
</dbReference>
<dbReference type="NCBIfam" id="TIGR01187">
    <property type="entry name" value="potA"/>
    <property type="match status" value="1"/>
</dbReference>
<dbReference type="PANTHER" id="PTHR42781">
    <property type="entry name" value="SPERMIDINE/PUTRESCINE IMPORT ATP-BINDING PROTEIN POTA"/>
    <property type="match status" value="1"/>
</dbReference>
<dbReference type="PANTHER" id="PTHR42781:SF4">
    <property type="entry name" value="SPERMIDINE_PUTRESCINE IMPORT ATP-BINDING PROTEIN POTA"/>
    <property type="match status" value="1"/>
</dbReference>
<dbReference type="Pfam" id="PF00005">
    <property type="entry name" value="ABC_tran"/>
    <property type="match status" value="1"/>
</dbReference>
<dbReference type="Pfam" id="PF08402">
    <property type="entry name" value="TOBE_2"/>
    <property type="match status" value="1"/>
</dbReference>
<dbReference type="SMART" id="SM00382">
    <property type="entry name" value="AAA"/>
    <property type="match status" value="1"/>
</dbReference>
<dbReference type="SUPFAM" id="SSF50331">
    <property type="entry name" value="MOP-like"/>
    <property type="match status" value="1"/>
</dbReference>
<dbReference type="SUPFAM" id="SSF52540">
    <property type="entry name" value="P-loop containing nucleoside triphosphate hydrolases"/>
    <property type="match status" value="1"/>
</dbReference>
<dbReference type="PROSITE" id="PS00211">
    <property type="entry name" value="ABC_TRANSPORTER_1"/>
    <property type="match status" value="1"/>
</dbReference>
<dbReference type="PROSITE" id="PS50893">
    <property type="entry name" value="ABC_TRANSPORTER_2"/>
    <property type="match status" value="1"/>
</dbReference>
<dbReference type="PROSITE" id="PS51305">
    <property type="entry name" value="POTA"/>
    <property type="match status" value="1"/>
</dbReference>
<accession>Q660M8</accession>
<organism>
    <name type="scientific">Borrelia garinii subsp. bavariensis (strain ATCC BAA-2496 / DSM 23469 / PBi)</name>
    <name type="common">Borreliella bavariensis</name>
    <dbReference type="NCBI Taxonomy" id="290434"/>
    <lineage>
        <taxon>Bacteria</taxon>
        <taxon>Pseudomonadati</taxon>
        <taxon>Spirochaetota</taxon>
        <taxon>Spirochaetia</taxon>
        <taxon>Spirochaetales</taxon>
        <taxon>Borreliaceae</taxon>
        <taxon>Borreliella</taxon>
    </lineage>
</organism>
<feature type="chain" id="PRO_0000286202" description="Spermidine/putrescine import ATP-binding protein PotA">
    <location>
        <begin position="1"/>
        <end position="347"/>
    </location>
</feature>
<feature type="domain" description="ABC transporter" evidence="1">
    <location>
        <begin position="6"/>
        <end position="238"/>
    </location>
</feature>
<feature type="binding site" evidence="1">
    <location>
        <begin position="40"/>
        <end position="47"/>
    </location>
    <ligand>
        <name>ATP</name>
        <dbReference type="ChEBI" id="CHEBI:30616"/>
    </ligand>
</feature>
<protein>
    <recommendedName>
        <fullName evidence="1">Spermidine/putrescine import ATP-binding protein PotA</fullName>
        <ecNumber evidence="1">7.6.2.11</ecNumber>
    </recommendedName>
</protein>